<evidence type="ECO:0000255" key="1">
    <source>
        <dbReference type="HAMAP-Rule" id="MF_00059"/>
    </source>
</evidence>
<gene>
    <name evidence="1" type="primary">rpoA</name>
    <name type="ordered locus">COSY_0194</name>
</gene>
<protein>
    <recommendedName>
        <fullName evidence="1">DNA-directed RNA polymerase subunit alpha</fullName>
        <shortName evidence="1">RNAP subunit alpha</shortName>
        <ecNumber evidence="1">2.7.7.6</ecNumber>
    </recommendedName>
    <alternativeName>
        <fullName evidence="1">RNA polymerase subunit alpha</fullName>
    </alternativeName>
    <alternativeName>
        <fullName evidence="1">Transcriptase subunit alpha</fullName>
    </alternativeName>
</protein>
<comment type="function">
    <text evidence="1">DNA-dependent RNA polymerase catalyzes the transcription of DNA into RNA using the four ribonucleoside triphosphates as substrates.</text>
</comment>
<comment type="catalytic activity">
    <reaction evidence="1">
        <text>RNA(n) + a ribonucleoside 5'-triphosphate = RNA(n+1) + diphosphate</text>
        <dbReference type="Rhea" id="RHEA:21248"/>
        <dbReference type="Rhea" id="RHEA-COMP:14527"/>
        <dbReference type="Rhea" id="RHEA-COMP:17342"/>
        <dbReference type="ChEBI" id="CHEBI:33019"/>
        <dbReference type="ChEBI" id="CHEBI:61557"/>
        <dbReference type="ChEBI" id="CHEBI:140395"/>
        <dbReference type="EC" id="2.7.7.6"/>
    </reaction>
</comment>
<comment type="subunit">
    <text evidence="1">Homodimer. The RNAP catalytic core consists of 2 alpha, 1 beta, 1 beta' and 1 omega subunit. When a sigma factor is associated with the core the holoenzyme is formed, which can initiate transcription.</text>
</comment>
<comment type="domain">
    <text evidence="1">The N-terminal domain is essential for RNAP assembly and basal transcription, whereas the C-terminal domain is involved in interaction with transcriptional regulators and with upstream promoter elements.</text>
</comment>
<comment type="similarity">
    <text evidence="1">Belongs to the RNA polymerase alpha chain family.</text>
</comment>
<name>RPOA_VESOH</name>
<sequence length="326" mass="35694">MQGSARDFLKPKLVESSQTGVNEFKVILEPLERGFGHTLGNAIRRTLLSSMTGFAVTEVVIDGVMHEFSTIDGVQEDVLDILLNLKEVSVVLNTVETAQVVIDKKGPCEITVADIETNGIDITTFNPDKVIATINDEGHMRMTLKITAGIGYDAAASRTDEASSIGGMQLDASFSPIKRVSFTVDAARVKQKVNLDKLNIMIETNGSVNAEVAIKRVATILQEQLSSFVELELVEEEVSLPTSEDFDPQLLAAVDELELTVRSANCLKAEQIYYIGDLIQKSEQDLLRTPNLGRKSLNEIKEVLTEKGLSLGTNIENWPPVDLMSE</sequence>
<organism>
    <name type="scientific">Vesicomyosocius okutanii subsp. Calyptogena okutanii (strain HA)</name>
    <dbReference type="NCBI Taxonomy" id="412965"/>
    <lineage>
        <taxon>Bacteria</taxon>
        <taxon>Pseudomonadati</taxon>
        <taxon>Pseudomonadota</taxon>
        <taxon>Gammaproteobacteria</taxon>
        <taxon>Candidatus Pseudothioglobaceae</taxon>
        <taxon>Candidatus Vesicomyosocius</taxon>
    </lineage>
</organism>
<keyword id="KW-0240">DNA-directed RNA polymerase</keyword>
<keyword id="KW-0548">Nucleotidyltransferase</keyword>
<keyword id="KW-1185">Reference proteome</keyword>
<keyword id="KW-0804">Transcription</keyword>
<keyword id="KW-0808">Transferase</keyword>
<reference key="1">
    <citation type="journal article" date="2007" name="Curr. Biol.">
        <title>Reduced genome of the thioautotrophic intracellular symbiont in a deep-sea clam, Calyptogena okutanii.</title>
        <authorList>
            <person name="Kuwahara H."/>
            <person name="Yoshida T."/>
            <person name="Takaki Y."/>
            <person name="Shimamura S."/>
            <person name="Nishi S."/>
            <person name="Harada M."/>
            <person name="Matsuyama K."/>
            <person name="Takishita K."/>
            <person name="Kawato M."/>
            <person name="Uematsu K."/>
            <person name="Fujiwara Y."/>
            <person name="Sato T."/>
            <person name="Kato C."/>
            <person name="Kitagawa M."/>
            <person name="Kato I."/>
            <person name="Maruyama T."/>
        </authorList>
    </citation>
    <scope>NUCLEOTIDE SEQUENCE [LARGE SCALE GENOMIC DNA]</scope>
    <source>
        <strain>HA</strain>
    </source>
</reference>
<accession>A5CXI9</accession>
<dbReference type="EC" id="2.7.7.6" evidence="1"/>
<dbReference type="EMBL" id="AP009247">
    <property type="protein sequence ID" value="BAF61324.1"/>
    <property type="molecule type" value="Genomic_DNA"/>
</dbReference>
<dbReference type="RefSeq" id="WP_011929594.1">
    <property type="nucleotide sequence ID" value="NC_009465.1"/>
</dbReference>
<dbReference type="SMR" id="A5CXI9"/>
<dbReference type="STRING" id="412965.COSY_0194"/>
<dbReference type="KEGG" id="vok:COSY_0194"/>
<dbReference type="eggNOG" id="COG0202">
    <property type="taxonomic scope" value="Bacteria"/>
</dbReference>
<dbReference type="HOGENOM" id="CLU_053084_0_0_6"/>
<dbReference type="OrthoDB" id="9805706at2"/>
<dbReference type="Proteomes" id="UP000000247">
    <property type="component" value="Chromosome"/>
</dbReference>
<dbReference type="GO" id="GO:0005737">
    <property type="term" value="C:cytoplasm"/>
    <property type="evidence" value="ECO:0007669"/>
    <property type="project" value="UniProtKB-ARBA"/>
</dbReference>
<dbReference type="GO" id="GO:0000428">
    <property type="term" value="C:DNA-directed RNA polymerase complex"/>
    <property type="evidence" value="ECO:0007669"/>
    <property type="project" value="UniProtKB-KW"/>
</dbReference>
<dbReference type="GO" id="GO:0003677">
    <property type="term" value="F:DNA binding"/>
    <property type="evidence" value="ECO:0007669"/>
    <property type="project" value="UniProtKB-UniRule"/>
</dbReference>
<dbReference type="GO" id="GO:0003899">
    <property type="term" value="F:DNA-directed RNA polymerase activity"/>
    <property type="evidence" value="ECO:0007669"/>
    <property type="project" value="UniProtKB-UniRule"/>
</dbReference>
<dbReference type="GO" id="GO:0046983">
    <property type="term" value="F:protein dimerization activity"/>
    <property type="evidence" value="ECO:0007669"/>
    <property type="project" value="InterPro"/>
</dbReference>
<dbReference type="GO" id="GO:0006351">
    <property type="term" value="P:DNA-templated transcription"/>
    <property type="evidence" value="ECO:0007669"/>
    <property type="project" value="UniProtKB-UniRule"/>
</dbReference>
<dbReference type="CDD" id="cd06928">
    <property type="entry name" value="RNAP_alpha_NTD"/>
    <property type="match status" value="1"/>
</dbReference>
<dbReference type="FunFam" id="1.10.150.20:FF:000001">
    <property type="entry name" value="DNA-directed RNA polymerase subunit alpha"/>
    <property type="match status" value="1"/>
</dbReference>
<dbReference type="FunFam" id="2.170.120.12:FF:000001">
    <property type="entry name" value="DNA-directed RNA polymerase subunit alpha"/>
    <property type="match status" value="1"/>
</dbReference>
<dbReference type="Gene3D" id="1.10.150.20">
    <property type="entry name" value="5' to 3' exonuclease, C-terminal subdomain"/>
    <property type="match status" value="1"/>
</dbReference>
<dbReference type="Gene3D" id="2.170.120.12">
    <property type="entry name" value="DNA-directed RNA polymerase, insert domain"/>
    <property type="match status" value="1"/>
</dbReference>
<dbReference type="Gene3D" id="3.30.1360.10">
    <property type="entry name" value="RNA polymerase, RBP11-like subunit"/>
    <property type="match status" value="1"/>
</dbReference>
<dbReference type="HAMAP" id="MF_00059">
    <property type="entry name" value="RNApol_bact_RpoA"/>
    <property type="match status" value="1"/>
</dbReference>
<dbReference type="InterPro" id="IPR011262">
    <property type="entry name" value="DNA-dir_RNA_pol_insert"/>
</dbReference>
<dbReference type="InterPro" id="IPR011263">
    <property type="entry name" value="DNA-dir_RNA_pol_RpoA/D/Rpb3"/>
</dbReference>
<dbReference type="InterPro" id="IPR011773">
    <property type="entry name" value="DNA-dir_RpoA"/>
</dbReference>
<dbReference type="InterPro" id="IPR036603">
    <property type="entry name" value="RBP11-like"/>
</dbReference>
<dbReference type="InterPro" id="IPR011260">
    <property type="entry name" value="RNAP_asu_C"/>
</dbReference>
<dbReference type="InterPro" id="IPR036643">
    <property type="entry name" value="RNApol_insert_sf"/>
</dbReference>
<dbReference type="NCBIfam" id="NF003513">
    <property type="entry name" value="PRK05182.1-2"/>
    <property type="match status" value="1"/>
</dbReference>
<dbReference type="NCBIfam" id="NF003519">
    <property type="entry name" value="PRK05182.2-5"/>
    <property type="match status" value="1"/>
</dbReference>
<dbReference type="NCBIfam" id="TIGR02027">
    <property type="entry name" value="rpoA"/>
    <property type="match status" value="1"/>
</dbReference>
<dbReference type="Pfam" id="PF01000">
    <property type="entry name" value="RNA_pol_A_bac"/>
    <property type="match status" value="1"/>
</dbReference>
<dbReference type="Pfam" id="PF03118">
    <property type="entry name" value="RNA_pol_A_CTD"/>
    <property type="match status" value="1"/>
</dbReference>
<dbReference type="Pfam" id="PF01193">
    <property type="entry name" value="RNA_pol_L"/>
    <property type="match status" value="1"/>
</dbReference>
<dbReference type="SMART" id="SM00662">
    <property type="entry name" value="RPOLD"/>
    <property type="match status" value="1"/>
</dbReference>
<dbReference type="SUPFAM" id="SSF47789">
    <property type="entry name" value="C-terminal domain of RNA polymerase alpha subunit"/>
    <property type="match status" value="1"/>
</dbReference>
<dbReference type="SUPFAM" id="SSF56553">
    <property type="entry name" value="Insert subdomain of RNA polymerase alpha subunit"/>
    <property type="match status" value="1"/>
</dbReference>
<dbReference type="SUPFAM" id="SSF55257">
    <property type="entry name" value="RBP11-like subunits of RNA polymerase"/>
    <property type="match status" value="1"/>
</dbReference>
<feature type="chain" id="PRO_0000296880" description="DNA-directed RNA polymerase subunit alpha">
    <location>
        <begin position="1"/>
        <end position="326"/>
    </location>
</feature>
<feature type="region of interest" description="Alpha N-terminal domain (alpha-NTD)" evidence="1">
    <location>
        <begin position="1"/>
        <end position="232"/>
    </location>
</feature>
<feature type="region of interest" description="Alpha C-terminal domain (alpha-CTD)" evidence="1">
    <location>
        <begin position="246"/>
        <end position="326"/>
    </location>
</feature>
<proteinExistence type="inferred from homology"/>